<protein>
    <recommendedName>
        <fullName>NADH-ubiquinone oxidoreductase chain 1</fullName>
        <ecNumber>7.1.1.2</ecNumber>
    </recommendedName>
    <alternativeName>
        <fullName>NADH dehydrogenase subunit 1</fullName>
    </alternativeName>
</protein>
<proteinExistence type="inferred from homology"/>
<comment type="function">
    <text evidence="1">Core subunit of the mitochondrial membrane respiratory chain NADH dehydrogenase (Complex I) that is believed to belong to the minimal assembly required for catalysis. Complex I functions in the transfer of electrons from NADH to the respiratory chain. The immediate electron acceptor for the enzyme is believed to be ubiquinone (By similarity).</text>
</comment>
<comment type="catalytic activity">
    <reaction>
        <text>a ubiquinone + NADH + 5 H(+)(in) = a ubiquinol + NAD(+) + 4 H(+)(out)</text>
        <dbReference type="Rhea" id="RHEA:29091"/>
        <dbReference type="Rhea" id="RHEA-COMP:9565"/>
        <dbReference type="Rhea" id="RHEA-COMP:9566"/>
        <dbReference type="ChEBI" id="CHEBI:15378"/>
        <dbReference type="ChEBI" id="CHEBI:16389"/>
        <dbReference type="ChEBI" id="CHEBI:17976"/>
        <dbReference type="ChEBI" id="CHEBI:57540"/>
        <dbReference type="ChEBI" id="CHEBI:57945"/>
        <dbReference type="EC" id="7.1.1.2"/>
    </reaction>
</comment>
<comment type="subcellular location">
    <subcellularLocation>
        <location evidence="1">Mitochondrion inner membrane</location>
        <topology evidence="1">Multi-pass membrane protein</topology>
    </subcellularLocation>
</comment>
<comment type="similarity">
    <text evidence="3">Belongs to the complex I subunit 1 family.</text>
</comment>
<gene>
    <name type="primary">ND1</name>
</gene>
<feature type="chain" id="PRO_0000117448" description="NADH-ubiquinone oxidoreductase chain 1">
    <location>
        <begin position="1"/>
        <end position="354"/>
    </location>
</feature>
<feature type="transmembrane region" description="Helical" evidence="2">
    <location>
        <begin position="43"/>
        <end position="63"/>
    </location>
</feature>
<feature type="transmembrane region" description="Helical" evidence="2">
    <location>
        <begin position="108"/>
        <end position="128"/>
    </location>
</feature>
<feature type="transmembrane region" description="Helical" evidence="2">
    <location>
        <begin position="139"/>
        <end position="159"/>
    </location>
</feature>
<feature type="transmembrane region" description="Helical" evidence="2">
    <location>
        <begin position="180"/>
        <end position="200"/>
    </location>
</feature>
<feature type="transmembrane region" description="Helical" evidence="2">
    <location>
        <begin position="211"/>
        <end position="231"/>
    </location>
</feature>
<feature type="transmembrane region" description="Helical" evidence="2">
    <location>
        <begin position="264"/>
        <end position="284"/>
    </location>
</feature>
<feature type="transmembrane region" description="Helical" evidence="2">
    <location>
        <begin position="298"/>
        <end position="318"/>
    </location>
</feature>
<feature type="transmembrane region" description="Helical" evidence="2">
    <location>
        <begin position="334"/>
        <end position="354"/>
    </location>
</feature>
<organism>
    <name type="scientific">Pecten maximus</name>
    <name type="common">King scallop</name>
    <name type="synonym">Pilgrim's clam</name>
    <dbReference type="NCBI Taxonomy" id="6579"/>
    <lineage>
        <taxon>Eukaryota</taxon>
        <taxon>Metazoa</taxon>
        <taxon>Spiralia</taxon>
        <taxon>Lophotrochozoa</taxon>
        <taxon>Mollusca</taxon>
        <taxon>Bivalvia</taxon>
        <taxon>Autobranchia</taxon>
        <taxon>Pteriomorphia</taxon>
        <taxon>Pectinida</taxon>
        <taxon>Pectinoidea</taxon>
        <taxon>Pectinidae</taxon>
        <taxon>Pecten</taxon>
    </lineage>
</organism>
<evidence type="ECO:0000250" key="1"/>
<evidence type="ECO:0000255" key="2"/>
<evidence type="ECO:0000305" key="3"/>
<sequence>MGGSFLQSWLNKALSWPGWYKWYWWLTSTKSLSIGRLVCVEALFWSLSFYVVVLLSVAYLTLFERKVLAASQVRKGPEMVGWLGIMQPFADGIKLFSKEYFTPSNSNPALFFLGPCFMLLHSFILWGCSPGIWGCGVYFFWGGLYVLSVLSVGVYGVVLCGWSSNSRYAMFGAVRALAQVISYEVMLVFLYLCPFFVVGSLDLESVSLSQVSGCNGGVLFLVLPWWVFCVLAESNRAPFDFVEGESELVSGFNVEYGSGGFAMIFIAEYSNILFLSTLTSVLFLGGGNLLGNGEYFGLISSSVIGSFFSFMVVFLIVLCRSSFPRYRYDMLMKLIWCQILPILMSCFALFLMII</sequence>
<name>NU1M_PECMA</name>
<dbReference type="EC" id="7.1.1.2"/>
<dbReference type="EMBL" id="X92688">
    <property type="protein sequence ID" value="CAA63369.1"/>
    <property type="molecule type" value="Genomic_DNA"/>
</dbReference>
<dbReference type="SMR" id="Q96186"/>
<dbReference type="OrthoDB" id="6281863at2759"/>
<dbReference type="GO" id="GO:0005743">
    <property type="term" value="C:mitochondrial inner membrane"/>
    <property type="evidence" value="ECO:0007669"/>
    <property type="project" value="UniProtKB-SubCell"/>
</dbReference>
<dbReference type="GO" id="GO:0008137">
    <property type="term" value="F:NADH dehydrogenase (ubiquinone) activity"/>
    <property type="evidence" value="ECO:0007669"/>
    <property type="project" value="UniProtKB-EC"/>
</dbReference>
<dbReference type="GO" id="GO:0009060">
    <property type="term" value="P:aerobic respiration"/>
    <property type="evidence" value="ECO:0007669"/>
    <property type="project" value="TreeGrafter"/>
</dbReference>
<dbReference type="HAMAP" id="MF_01350">
    <property type="entry name" value="NDH1_NuoH"/>
    <property type="match status" value="1"/>
</dbReference>
<dbReference type="InterPro" id="IPR001694">
    <property type="entry name" value="NADH_UbQ_OxRdtase_su1/FPO"/>
</dbReference>
<dbReference type="InterPro" id="IPR018086">
    <property type="entry name" value="NADH_UbQ_OxRdtase_su1_CS"/>
</dbReference>
<dbReference type="PANTHER" id="PTHR11432">
    <property type="entry name" value="NADH DEHYDROGENASE SUBUNIT 1"/>
    <property type="match status" value="1"/>
</dbReference>
<dbReference type="PANTHER" id="PTHR11432:SF3">
    <property type="entry name" value="NADH-UBIQUINONE OXIDOREDUCTASE CHAIN 1"/>
    <property type="match status" value="1"/>
</dbReference>
<dbReference type="Pfam" id="PF00146">
    <property type="entry name" value="NADHdh"/>
    <property type="match status" value="1"/>
</dbReference>
<dbReference type="PROSITE" id="PS00667">
    <property type="entry name" value="COMPLEX1_ND1_1"/>
    <property type="match status" value="1"/>
</dbReference>
<dbReference type="PROSITE" id="PS00668">
    <property type="entry name" value="COMPLEX1_ND1_2"/>
    <property type="match status" value="1"/>
</dbReference>
<keyword id="KW-0249">Electron transport</keyword>
<keyword id="KW-0472">Membrane</keyword>
<keyword id="KW-0496">Mitochondrion</keyword>
<keyword id="KW-0999">Mitochondrion inner membrane</keyword>
<keyword id="KW-0520">NAD</keyword>
<keyword id="KW-0679">Respiratory chain</keyword>
<keyword id="KW-1278">Translocase</keyword>
<keyword id="KW-0812">Transmembrane</keyword>
<keyword id="KW-1133">Transmembrane helix</keyword>
<keyword id="KW-0813">Transport</keyword>
<keyword id="KW-0830">Ubiquinone</keyword>
<accession>Q96186</accession>
<geneLocation type="mitochondrion"/>
<reference key="1">
    <citation type="journal article" date="1995" name="J. Mol. Evol.">
        <title>Molecular cloning and complete nucleotide sequence of the repeated unit and flanking gene of the scallop Pecten maximus mitochondrial DNA: putative replication origin features.</title>
        <authorList>
            <person name="Rigaa A."/>
            <person name="Monnerot M."/>
            <person name="Sellos D."/>
        </authorList>
    </citation>
    <scope>NUCLEOTIDE SEQUENCE [GENOMIC DNA]</scope>
    <source>
        <tissue>Muscle</tissue>
    </source>
</reference>